<protein>
    <recommendedName>
        <fullName evidence="1">Ketol-acid reductoisomerase (NADP(+)) 2</fullName>
        <shortName evidence="1">KARI 2</shortName>
        <ecNumber evidence="1">1.1.1.86</ecNumber>
    </recommendedName>
    <alternativeName>
        <fullName evidence="1">Acetohydroxy-acid isomeroreductase 2</fullName>
        <shortName evidence="1">AHIR 2</shortName>
    </alternativeName>
    <alternativeName>
        <fullName evidence="1">Alpha-keto-beta-hydroxylacyl reductoisomerase 2</fullName>
    </alternativeName>
    <alternativeName>
        <fullName evidence="1">Ketol-acid reductoisomerase type 1</fullName>
    </alternativeName>
    <alternativeName>
        <fullName evidence="1">Ketol-acid reductoisomerase type I</fullName>
    </alternativeName>
</protein>
<sequence>MKTYYEQDANVGLLQGKTVAVIGYGSQGHAQAQNLRDSGVEVVVGVRPGKSFEVAKADGFKVMSVSEAVRTAQVVQMLLPDEQQAHVYKAEVEENLREGQMLLFSHGFNIHFGQINPPSYVDVAMVAPKSPGHLVRRVFQEGNGVPALVAVHQDATGTALHVALAYAKGVGCTRAGVIETTFQEETETDLFGEQAVLCGGVTALVKAGFETLTEGGYRPEIAYFECLHELKLIVDLMYEGGLTNMRHSISDTAEFGDYVTGSRIVTDETKKEMKRVLTEIQQGEFAKKWILENQAGRPTYNAMKKAEQNHQLEKVGEELREMMSWIHAPKELVKK</sequence>
<keyword id="KW-0028">Amino-acid biosynthesis</keyword>
<keyword id="KW-0100">Branched-chain amino acid biosynthesis</keyword>
<keyword id="KW-0460">Magnesium</keyword>
<keyword id="KW-0479">Metal-binding</keyword>
<keyword id="KW-0521">NADP</keyword>
<keyword id="KW-0560">Oxidoreductase</keyword>
<organism>
    <name type="scientific">Bacillus thuringiensis subsp. konkukian (strain 97-27)</name>
    <dbReference type="NCBI Taxonomy" id="281309"/>
    <lineage>
        <taxon>Bacteria</taxon>
        <taxon>Bacillati</taxon>
        <taxon>Bacillota</taxon>
        <taxon>Bacilli</taxon>
        <taxon>Bacillales</taxon>
        <taxon>Bacillaceae</taxon>
        <taxon>Bacillus</taxon>
        <taxon>Bacillus cereus group</taxon>
    </lineage>
</organism>
<evidence type="ECO:0000255" key="1">
    <source>
        <dbReference type="HAMAP-Rule" id="MF_00435"/>
    </source>
</evidence>
<evidence type="ECO:0000255" key="2">
    <source>
        <dbReference type="PROSITE-ProRule" id="PRU01197"/>
    </source>
</evidence>
<evidence type="ECO:0000255" key="3">
    <source>
        <dbReference type="PROSITE-ProRule" id="PRU01198"/>
    </source>
</evidence>
<name>ILVC2_BACHK</name>
<proteinExistence type="inferred from homology"/>
<comment type="function">
    <text evidence="1">Involved in the biosynthesis of branched-chain amino acids (BCAA). Catalyzes an alkyl-migration followed by a ketol-acid reduction of (S)-2-acetolactate (S2AL) to yield (R)-2,3-dihydroxy-isovalerate. In the isomerase reaction, S2AL is rearranged via a Mg-dependent methyl migration to produce 3-hydroxy-3-methyl-2-ketobutyrate (HMKB). In the reductase reaction, this 2-ketoacid undergoes a metal-dependent reduction by NADPH to yield (R)-2,3-dihydroxy-isovalerate.</text>
</comment>
<comment type="catalytic activity">
    <reaction evidence="1">
        <text>(2R)-2,3-dihydroxy-3-methylbutanoate + NADP(+) = (2S)-2-acetolactate + NADPH + H(+)</text>
        <dbReference type="Rhea" id="RHEA:22068"/>
        <dbReference type="ChEBI" id="CHEBI:15378"/>
        <dbReference type="ChEBI" id="CHEBI:49072"/>
        <dbReference type="ChEBI" id="CHEBI:57783"/>
        <dbReference type="ChEBI" id="CHEBI:58349"/>
        <dbReference type="ChEBI" id="CHEBI:58476"/>
        <dbReference type="EC" id="1.1.1.86"/>
    </reaction>
</comment>
<comment type="catalytic activity">
    <reaction evidence="1">
        <text>(2R,3R)-2,3-dihydroxy-3-methylpentanoate + NADP(+) = (S)-2-ethyl-2-hydroxy-3-oxobutanoate + NADPH + H(+)</text>
        <dbReference type="Rhea" id="RHEA:13493"/>
        <dbReference type="ChEBI" id="CHEBI:15378"/>
        <dbReference type="ChEBI" id="CHEBI:49256"/>
        <dbReference type="ChEBI" id="CHEBI:49258"/>
        <dbReference type="ChEBI" id="CHEBI:57783"/>
        <dbReference type="ChEBI" id="CHEBI:58349"/>
        <dbReference type="EC" id="1.1.1.86"/>
    </reaction>
</comment>
<comment type="cofactor">
    <cofactor evidence="1">
        <name>Mg(2+)</name>
        <dbReference type="ChEBI" id="CHEBI:18420"/>
    </cofactor>
    <text evidence="1">Binds 2 magnesium ions per subunit.</text>
</comment>
<comment type="pathway">
    <text evidence="1">Amino-acid biosynthesis; L-isoleucine biosynthesis; L-isoleucine from 2-oxobutanoate: step 2/4.</text>
</comment>
<comment type="pathway">
    <text evidence="1">Amino-acid biosynthesis; L-valine biosynthesis; L-valine from pyruvate: step 2/4.</text>
</comment>
<comment type="similarity">
    <text evidence="1">Belongs to the ketol-acid reductoisomerase family.</text>
</comment>
<dbReference type="EC" id="1.1.1.86" evidence="1"/>
<dbReference type="EMBL" id="AE017355">
    <property type="protein sequence ID" value="AAT59605.1"/>
    <property type="molecule type" value="Genomic_DNA"/>
</dbReference>
<dbReference type="RefSeq" id="YP_036025.1">
    <property type="nucleotide sequence ID" value="NC_005957.1"/>
</dbReference>
<dbReference type="SMR" id="Q6HKA1"/>
<dbReference type="KEGG" id="btk:BT9727_1693"/>
<dbReference type="PATRIC" id="fig|281309.8.peg.1783"/>
<dbReference type="HOGENOM" id="CLU_033821_0_1_9"/>
<dbReference type="UniPathway" id="UPA00047">
    <property type="reaction ID" value="UER00056"/>
</dbReference>
<dbReference type="UniPathway" id="UPA00049">
    <property type="reaction ID" value="UER00060"/>
</dbReference>
<dbReference type="Proteomes" id="UP000001301">
    <property type="component" value="Chromosome"/>
</dbReference>
<dbReference type="GO" id="GO:0005829">
    <property type="term" value="C:cytosol"/>
    <property type="evidence" value="ECO:0007669"/>
    <property type="project" value="TreeGrafter"/>
</dbReference>
<dbReference type="GO" id="GO:0004455">
    <property type="term" value="F:ketol-acid reductoisomerase activity"/>
    <property type="evidence" value="ECO:0007669"/>
    <property type="project" value="UniProtKB-UniRule"/>
</dbReference>
<dbReference type="GO" id="GO:0000287">
    <property type="term" value="F:magnesium ion binding"/>
    <property type="evidence" value="ECO:0007669"/>
    <property type="project" value="UniProtKB-UniRule"/>
</dbReference>
<dbReference type="GO" id="GO:0050661">
    <property type="term" value="F:NADP binding"/>
    <property type="evidence" value="ECO:0007669"/>
    <property type="project" value="InterPro"/>
</dbReference>
<dbReference type="GO" id="GO:0009097">
    <property type="term" value="P:isoleucine biosynthetic process"/>
    <property type="evidence" value="ECO:0007669"/>
    <property type="project" value="UniProtKB-UniRule"/>
</dbReference>
<dbReference type="GO" id="GO:0009099">
    <property type="term" value="P:L-valine biosynthetic process"/>
    <property type="evidence" value="ECO:0007669"/>
    <property type="project" value="UniProtKB-UniRule"/>
</dbReference>
<dbReference type="FunFam" id="3.40.50.720:FF:000023">
    <property type="entry name" value="Ketol-acid reductoisomerase (NADP(+))"/>
    <property type="match status" value="1"/>
</dbReference>
<dbReference type="Gene3D" id="6.10.240.10">
    <property type="match status" value="1"/>
</dbReference>
<dbReference type="Gene3D" id="3.40.50.720">
    <property type="entry name" value="NAD(P)-binding Rossmann-like Domain"/>
    <property type="match status" value="1"/>
</dbReference>
<dbReference type="HAMAP" id="MF_00435">
    <property type="entry name" value="IlvC"/>
    <property type="match status" value="1"/>
</dbReference>
<dbReference type="InterPro" id="IPR008927">
    <property type="entry name" value="6-PGluconate_DH-like_C_sf"/>
</dbReference>
<dbReference type="InterPro" id="IPR013023">
    <property type="entry name" value="KARI"/>
</dbReference>
<dbReference type="InterPro" id="IPR000506">
    <property type="entry name" value="KARI_C"/>
</dbReference>
<dbReference type="InterPro" id="IPR013116">
    <property type="entry name" value="KARI_N"/>
</dbReference>
<dbReference type="InterPro" id="IPR014359">
    <property type="entry name" value="KARI_prok"/>
</dbReference>
<dbReference type="InterPro" id="IPR036291">
    <property type="entry name" value="NAD(P)-bd_dom_sf"/>
</dbReference>
<dbReference type="NCBIfam" id="TIGR00465">
    <property type="entry name" value="ilvC"/>
    <property type="match status" value="1"/>
</dbReference>
<dbReference type="NCBIfam" id="NF004017">
    <property type="entry name" value="PRK05479.1"/>
    <property type="match status" value="1"/>
</dbReference>
<dbReference type="NCBIfam" id="NF009940">
    <property type="entry name" value="PRK13403.1"/>
    <property type="match status" value="1"/>
</dbReference>
<dbReference type="PANTHER" id="PTHR21371">
    <property type="entry name" value="KETOL-ACID REDUCTOISOMERASE, MITOCHONDRIAL"/>
    <property type="match status" value="1"/>
</dbReference>
<dbReference type="PANTHER" id="PTHR21371:SF1">
    <property type="entry name" value="KETOL-ACID REDUCTOISOMERASE, MITOCHONDRIAL"/>
    <property type="match status" value="1"/>
</dbReference>
<dbReference type="Pfam" id="PF01450">
    <property type="entry name" value="KARI_C"/>
    <property type="match status" value="1"/>
</dbReference>
<dbReference type="Pfam" id="PF07991">
    <property type="entry name" value="KARI_N"/>
    <property type="match status" value="1"/>
</dbReference>
<dbReference type="PIRSF" id="PIRSF000116">
    <property type="entry name" value="IlvC_gammaproteo"/>
    <property type="match status" value="1"/>
</dbReference>
<dbReference type="SUPFAM" id="SSF48179">
    <property type="entry name" value="6-phosphogluconate dehydrogenase C-terminal domain-like"/>
    <property type="match status" value="1"/>
</dbReference>
<dbReference type="SUPFAM" id="SSF51735">
    <property type="entry name" value="NAD(P)-binding Rossmann-fold domains"/>
    <property type="match status" value="1"/>
</dbReference>
<dbReference type="PROSITE" id="PS51851">
    <property type="entry name" value="KARI_C"/>
    <property type="match status" value="1"/>
</dbReference>
<dbReference type="PROSITE" id="PS51850">
    <property type="entry name" value="KARI_N"/>
    <property type="match status" value="1"/>
</dbReference>
<reference key="1">
    <citation type="journal article" date="2006" name="J. Bacteriol.">
        <title>Pathogenomic sequence analysis of Bacillus cereus and Bacillus thuringiensis isolates closely related to Bacillus anthracis.</title>
        <authorList>
            <person name="Han C.S."/>
            <person name="Xie G."/>
            <person name="Challacombe J.F."/>
            <person name="Altherr M.R."/>
            <person name="Bhotika S.S."/>
            <person name="Bruce D."/>
            <person name="Campbell C.S."/>
            <person name="Campbell M.L."/>
            <person name="Chen J."/>
            <person name="Chertkov O."/>
            <person name="Cleland C."/>
            <person name="Dimitrijevic M."/>
            <person name="Doggett N.A."/>
            <person name="Fawcett J.J."/>
            <person name="Glavina T."/>
            <person name="Goodwin L.A."/>
            <person name="Hill K.K."/>
            <person name="Hitchcock P."/>
            <person name="Jackson P.J."/>
            <person name="Keim P."/>
            <person name="Kewalramani A.R."/>
            <person name="Longmire J."/>
            <person name="Lucas S."/>
            <person name="Malfatti S."/>
            <person name="McMurry K."/>
            <person name="Meincke L.J."/>
            <person name="Misra M."/>
            <person name="Moseman B.L."/>
            <person name="Mundt M."/>
            <person name="Munk A.C."/>
            <person name="Okinaka R.T."/>
            <person name="Parson-Quintana B."/>
            <person name="Reilly L.P."/>
            <person name="Richardson P."/>
            <person name="Robinson D.L."/>
            <person name="Rubin E."/>
            <person name="Saunders E."/>
            <person name="Tapia R."/>
            <person name="Tesmer J.G."/>
            <person name="Thayer N."/>
            <person name="Thompson L.S."/>
            <person name="Tice H."/>
            <person name="Ticknor L.O."/>
            <person name="Wills P.L."/>
            <person name="Brettin T.S."/>
            <person name="Gilna P."/>
        </authorList>
    </citation>
    <scope>NUCLEOTIDE SEQUENCE [LARGE SCALE GENOMIC DNA]</scope>
    <source>
        <strain>97-27</strain>
    </source>
</reference>
<gene>
    <name evidence="1" type="primary">ilvC2</name>
    <name type="ordered locus">BT9727_1693</name>
</gene>
<feature type="chain" id="PRO_0000226160" description="Ketol-acid reductoisomerase (NADP(+)) 2">
    <location>
        <begin position="1"/>
        <end position="335"/>
    </location>
</feature>
<feature type="domain" description="KARI N-terminal Rossmann" evidence="2">
    <location>
        <begin position="1"/>
        <end position="180"/>
    </location>
</feature>
<feature type="domain" description="KARI C-terminal knotted" evidence="3">
    <location>
        <begin position="181"/>
        <end position="326"/>
    </location>
</feature>
<feature type="active site" evidence="1">
    <location>
        <position position="106"/>
    </location>
</feature>
<feature type="binding site" evidence="1">
    <location>
        <begin position="24"/>
        <end position="27"/>
    </location>
    <ligand>
        <name>NADP(+)</name>
        <dbReference type="ChEBI" id="CHEBI:58349"/>
    </ligand>
</feature>
<feature type="binding site" evidence="1">
    <location>
        <position position="47"/>
    </location>
    <ligand>
        <name>NADP(+)</name>
        <dbReference type="ChEBI" id="CHEBI:58349"/>
    </ligand>
</feature>
<feature type="binding site" evidence="1">
    <location>
        <position position="51"/>
    </location>
    <ligand>
        <name>NADP(+)</name>
        <dbReference type="ChEBI" id="CHEBI:58349"/>
    </ligand>
</feature>
<feature type="binding site" evidence="1">
    <location>
        <begin position="81"/>
        <end position="84"/>
    </location>
    <ligand>
        <name>NADP(+)</name>
        <dbReference type="ChEBI" id="CHEBI:58349"/>
    </ligand>
</feature>
<feature type="binding site" evidence="1">
    <location>
        <position position="132"/>
    </location>
    <ligand>
        <name>NADP(+)</name>
        <dbReference type="ChEBI" id="CHEBI:58349"/>
    </ligand>
</feature>
<feature type="binding site" evidence="1">
    <location>
        <position position="189"/>
    </location>
    <ligand>
        <name>Mg(2+)</name>
        <dbReference type="ChEBI" id="CHEBI:18420"/>
        <label>1</label>
    </ligand>
</feature>
<feature type="binding site" evidence="1">
    <location>
        <position position="189"/>
    </location>
    <ligand>
        <name>Mg(2+)</name>
        <dbReference type="ChEBI" id="CHEBI:18420"/>
        <label>2</label>
    </ligand>
</feature>
<feature type="binding site" evidence="1">
    <location>
        <position position="193"/>
    </location>
    <ligand>
        <name>Mg(2+)</name>
        <dbReference type="ChEBI" id="CHEBI:18420"/>
        <label>1</label>
    </ligand>
</feature>
<feature type="binding site" evidence="1">
    <location>
        <position position="225"/>
    </location>
    <ligand>
        <name>Mg(2+)</name>
        <dbReference type="ChEBI" id="CHEBI:18420"/>
        <label>2</label>
    </ligand>
</feature>
<feature type="binding site" evidence="1">
    <location>
        <position position="229"/>
    </location>
    <ligand>
        <name>Mg(2+)</name>
        <dbReference type="ChEBI" id="CHEBI:18420"/>
        <label>2</label>
    </ligand>
</feature>
<feature type="binding site" evidence="1">
    <location>
        <position position="250"/>
    </location>
    <ligand>
        <name>substrate</name>
    </ligand>
</feature>
<accession>Q6HKA1</accession>